<evidence type="ECO:0000255" key="1">
    <source>
        <dbReference type="HAMAP-Rule" id="MF_00518"/>
    </source>
</evidence>
<reference key="1">
    <citation type="journal article" date="2009" name="PLoS Genet.">
        <title>Organised genome dynamics in the Escherichia coli species results in highly diverse adaptive paths.</title>
        <authorList>
            <person name="Touchon M."/>
            <person name="Hoede C."/>
            <person name="Tenaillon O."/>
            <person name="Barbe V."/>
            <person name="Baeriswyl S."/>
            <person name="Bidet P."/>
            <person name="Bingen E."/>
            <person name="Bonacorsi S."/>
            <person name="Bouchier C."/>
            <person name="Bouvet O."/>
            <person name="Calteau A."/>
            <person name="Chiapello H."/>
            <person name="Clermont O."/>
            <person name="Cruveiller S."/>
            <person name="Danchin A."/>
            <person name="Diard M."/>
            <person name="Dossat C."/>
            <person name="Karoui M.E."/>
            <person name="Frapy E."/>
            <person name="Garry L."/>
            <person name="Ghigo J.M."/>
            <person name="Gilles A.M."/>
            <person name="Johnson J."/>
            <person name="Le Bouguenec C."/>
            <person name="Lescat M."/>
            <person name="Mangenot S."/>
            <person name="Martinez-Jehanne V."/>
            <person name="Matic I."/>
            <person name="Nassif X."/>
            <person name="Oztas S."/>
            <person name="Petit M.A."/>
            <person name="Pichon C."/>
            <person name="Rouy Z."/>
            <person name="Ruf C.S."/>
            <person name="Schneider D."/>
            <person name="Tourret J."/>
            <person name="Vacherie B."/>
            <person name="Vallenet D."/>
            <person name="Medigue C."/>
            <person name="Rocha E.P.C."/>
            <person name="Denamur E."/>
        </authorList>
    </citation>
    <scope>NUCLEOTIDE SEQUENCE [LARGE SCALE GENOMIC DNA]</scope>
    <source>
        <strain>ED1a</strain>
    </source>
</reference>
<name>DTD_ECO81</name>
<comment type="function">
    <text evidence="1">An aminoacyl-tRNA editing enzyme that deacylates mischarged D-aminoacyl-tRNAs. Also deacylates mischarged glycyl-tRNA(Ala), protecting cells against glycine mischarging by AlaRS. Acts via tRNA-based rather than protein-based catalysis; rejects L-amino acids rather than detecting D-amino acids in the active site. By recycling D-aminoacyl-tRNA to D-amino acids and free tRNA molecules, this enzyme counteracts the toxicity associated with the formation of D-aminoacyl-tRNA entities in vivo and helps enforce protein L-homochirality.</text>
</comment>
<comment type="catalytic activity">
    <reaction evidence="1">
        <text>glycyl-tRNA(Ala) + H2O = tRNA(Ala) + glycine + H(+)</text>
        <dbReference type="Rhea" id="RHEA:53744"/>
        <dbReference type="Rhea" id="RHEA-COMP:9657"/>
        <dbReference type="Rhea" id="RHEA-COMP:13640"/>
        <dbReference type="ChEBI" id="CHEBI:15377"/>
        <dbReference type="ChEBI" id="CHEBI:15378"/>
        <dbReference type="ChEBI" id="CHEBI:57305"/>
        <dbReference type="ChEBI" id="CHEBI:78442"/>
        <dbReference type="ChEBI" id="CHEBI:78522"/>
        <dbReference type="EC" id="3.1.1.96"/>
    </reaction>
</comment>
<comment type="catalytic activity">
    <reaction evidence="1">
        <text>a D-aminoacyl-tRNA + H2O = a tRNA + a D-alpha-amino acid + H(+)</text>
        <dbReference type="Rhea" id="RHEA:13953"/>
        <dbReference type="Rhea" id="RHEA-COMP:10123"/>
        <dbReference type="Rhea" id="RHEA-COMP:10124"/>
        <dbReference type="ChEBI" id="CHEBI:15377"/>
        <dbReference type="ChEBI" id="CHEBI:15378"/>
        <dbReference type="ChEBI" id="CHEBI:59871"/>
        <dbReference type="ChEBI" id="CHEBI:78442"/>
        <dbReference type="ChEBI" id="CHEBI:79333"/>
        <dbReference type="EC" id="3.1.1.96"/>
    </reaction>
</comment>
<comment type="subunit">
    <text evidence="1">Homodimer.</text>
</comment>
<comment type="subcellular location">
    <subcellularLocation>
        <location evidence="1">Cytoplasm</location>
    </subcellularLocation>
</comment>
<comment type="domain">
    <text evidence="1">A Gly-cisPro motif from one monomer fits into the active site of the other monomer to allow specific chiral rejection of L-amino acids.</text>
</comment>
<comment type="similarity">
    <text evidence="1">Belongs to the DTD family.</text>
</comment>
<sequence length="145" mass="15936">MIALIQRVTRASVTVEGEVTGEIGAGLLVLLGVEKDDDEQKANRLCERVLGYRIFSDADGKMNLNVQQAGGSVLVVSQFTLAADTERGMRPSFSKGASPDRAEALYDYFVERCRQQEMNTQTGRFAADMQVSLVNDGPVTFWLQV</sequence>
<organism>
    <name type="scientific">Escherichia coli O81 (strain ED1a)</name>
    <dbReference type="NCBI Taxonomy" id="585397"/>
    <lineage>
        <taxon>Bacteria</taxon>
        <taxon>Pseudomonadati</taxon>
        <taxon>Pseudomonadota</taxon>
        <taxon>Gammaproteobacteria</taxon>
        <taxon>Enterobacterales</taxon>
        <taxon>Enterobacteriaceae</taxon>
        <taxon>Escherichia</taxon>
    </lineage>
</organism>
<proteinExistence type="inferred from homology"/>
<accession>B7N2M8</accession>
<keyword id="KW-0963">Cytoplasm</keyword>
<keyword id="KW-0378">Hydrolase</keyword>
<keyword id="KW-0694">RNA-binding</keyword>
<keyword id="KW-0820">tRNA-binding</keyword>
<gene>
    <name evidence="1" type="primary">dtd</name>
    <name type="ordered locus">ECED1_4587</name>
</gene>
<protein>
    <recommendedName>
        <fullName evidence="1">D-aminoacyl-tRNA deacylase</fullName>
        <shortName evidence="1">DTD</shortName>
        <ecNumber evidence="1">3.1.1.96</ecNumber>
    </recommendedName>
    <alternativeName>
        <fullName evidence="1">Gly-tRNA(Ala) deacylase</fullName>
    </alternativeName>
</protein>
<feature type="chain" id="PRO_1000146197" description="D-aminoacyl-tRNA deacylase">
    <location>
        <begin position="1"/>
        <end position="145"/>
    </location>
</feature>
<feature type="short sequence motif" description="Gly-cisPro motif, important for rejection of L-amino acids" evidence="1">
    <location>
        <begin position="137"/>
        <end position="138"/>
    </location>
</feature>
<dbReference type="EC" id="3.1.1.96" evidence="1"/>
<dbReference type="EMBL" id="CU928162">
    <property type="protein sequence ID" value="CAR10697.2"/>
    <property type="molecule type" value="Genomic_DNA"/>
</dbReference>
<dbReference type="RefSeq" id="WP_000560978.1">
    <property type="nucleotide sequence ID" value="NC_011745.1"/>
</dbReference>
<dbReference type="SMR" id="B7N2M8"/>
<dbReference type="KEGG" id="ecq:ECED1_4587"/>
<dbReference type="HOGENOM" id="CLU_076901_1_0_6"/>
<dbReference type="Proteomes" id="UP000000748">
    <property type="component" value="Chromosome"/>
</dbReference>
<dbReference type="GO" id="GO:0005737">
    <property type="term" value="C:cytoplasm"/>
    <property type="evidence" value="ECO:0007669"/>
    <property type="project" value="UniProtKB-SubCell"/>
</dbReference>
<dbReference type="GO" id="GO:0051500">
    <property type="term" value="F:D-tyrosyl-tRNA(Tyr) deacylase activity"/>
    <property type="evidence" value="ECO:0007669"/>
    <property type="project" value="TreeGrafter"/>
</dbReference>
<dbReference type="GO" id="GO:0106026">
    <property type="term" value="F:Gly-tRNA(Ala) deacylase activity"/>
    <property type="evidence" value="ECO:0007669"/>
    <property type="project" value="UniProtKB-UniRule"/>
</dbReference>
<dbReference type="GO" id="GO:0043908">
    <property type="term" value="F:Ser(Gly)-tRNA(Ala) hydrolase activity"/>
    <property type="evidence" value="ECO:0007669"/>
    <property type="project" value="UniProtKB-UniRule"/>
</dbReference>
<dbReference type="GO" id="GO:0000049">
    <property type="term" value="F:tRNA binding"/>
    <property type="evidence" value="ECO:0007669"/>
    <property type="project" value="UniProtKB-UniRule"/>
</dbReference>
<dbReference type="GO" id="GO:0019478">
    <property type="term" value="P:D-amino acid catabolic process"/>
    <property type="evidence" value="ECO:0007669"/>
    <property type="project" value="UniProtKB-UniRule"/>
</dbReference>
<dbReference type="CDD" id="cd00563">
    <property type="entry name" value="Dtyr_deacylase"/>
    <property type="match status" value="1"/>
</dbReference>
<dbReference type="FunFam" id="3.50.80.10:FF:000001">
    <property type="entry name" value="D-aminoacyl-tRNA deacylase"/>
    <property type="match status" value="1"/>
</dbReference>
<dbReference type="Gene3D" id="3.50.80.10">
    <property type="entry name" value="D-tyrosyl-tRNA(Tyr) deacylase"/>
    <property type="match status" value="1"/>
</dbReference>
<dbReference type="HAMAP" id="MF_00518">
    <property type="entry name" value="Deacylase_Dtd"/>
    <property type="match status" value="1"/>
</dbReference>
<dbReference type="InterPro" id="IPR003732">
    <property type="entry name" value="Daa-tRNA_deacyls_DTD"/>
</dbReference>
<dbReference type="InterPro" id="IPR023509">
    <property type="entry name" value="DTD-like_sf"/>
</dbReference>
<dbReference type="NCBIfam" id="TIGR00256">
    <property type="entry name" value="D-aminoacyl-tRNA deacylase"/>
    <property type="match status" value="1"/>
</dbReference>
<dbReference type="PANTHER" id="PTHR10472:SF5">
    <property type="entry name" value="D-AMINOACYL-TRNA DEACYLASE 1"/>
    <property type="match status" value="1"/>
</dbReference>
<dbReference type="PANTHER" id="PTHR10472">
    <property type="entry name" value="D-TYROSYL-TRNA TYR DEACYLASE"/>
    <property type="match status" value="1"/>
</dbReference>
<dbReference type="Pfam" id="PF02580">
    <property type="entry name" value="Tyr_Deacylase"/>
    <property type="match status" value="1"/>
</dbReference>
<dbReference type="SUPFAM" id="SSF69500">
    <property type="entry name" value="DTD-like"/>
    <property type="match status" value="1"/>
</dbReference>